<sequence length="104" mass="12159">MKKRLLEDIAASSNSSLIKIIMAGEEDDLEMRGKIYGCDDYSPPVNWDSVMVMVERRERASKNVPNCPECGTEQVQLVHWQTNNLRYKCRHCKHRFDREENDKA</sequence>
<proteinExistence type="predicted"/>
<organismHost>
    <name type="scientific">Escherichia coli</name>
    <dbReference type="NCBI Taxonomy" id="562"/>
</organismHost>
<feature type="chain" id="PRO_0000165116" description="Uncharacterized 12.2 kDa protein in nrdC-mobD intergenic region">
    <location>
        <begin position="1"/>
        <end position="104"/>
    </location>
</feature>
<organism>
    <name type="scientific">Enterobacteria phage T4</name>
    <name type="common">Bacteriophage T4</name>
    <dbReference type="NCBI Taxonomy" id="10665"/>
    <lineage>
        <taxon>Viruses</taxon>
        <taxon>Duplodnaviria</taxon>
        <taxon>Heunggongvirae</taxon>
        <taxon>Uroviricota</taxon>
        <taxon>Caudoviricetes</taxon>
        <taxon>Straboviridae</taxon>
        <taxon>Tevenvirinae</taxon>
        <taxon>Tequatrovirus</taxon>
    </lineage>
</organism>
<protein>
    <recommendedName>
        <fullName>Uncharacterized 12.2 kDa protein in nrdC-mobD intergenic region</fullName>
    </recommendedName>
</protein>
<keyword id="KW-1185">Reference proteome</keyword>
<accession>P39253</accession>
<accession>Q96222</accession>
<dbReference type="EMBL" id="U76612">
    <property type="protein sequence ID" value="AAB26980.1"/>
    <property type="molecule type" value="Genomic_DNA"/>
</dbReference>
<dbReference type="EMBL" id="AF158101">
    <property type="protein sequence ID" value="AAD42630.1"/>
    <property type="molecule type" value="Genomic_DNA"/>
</dbReference>
<dbReference type="RefSeq" id="NP_049700.1">
    <property type="nucleotide sequence ID" value="NC_000866.4"/>
</dbReference>
<dbReference type="GeneID" id="1258742"/>
<dbReference type="KEGG" id="vg:1258742"/>
<dbReference type="OrthoDB" id="26965at10239"/>
<dbReference type="Proteomes" id="UP000009087">
    <property type="component" value="Segment"/>
</dbReference>
<dbReference type="SUPFAM" id="SSF57783">
    <property type="entry name" value="Zinc beta-ribbon"/>
    <property type="match status" value="1"/>
</dbReference>
<name>Y04N_BPT4</name>
<gene>
    <name type="primary">y04N</name>
    <name type="synonym">nrdC.2</name>
</gene>
<reference key="1">
    <citation type="submission" date="1996-11" db="EMBL/GenBank/DDBJ databases">
        <title>The 10.7 kb 'nonessential' region of bacteriophage T4 between the genes tk and nrdC: twenty new t4 genes, generally conserved among T-even phages.</title>
        <authorList>
            <person name="Mzhavia N."/>
            <person name="Marusich E."/>
            <person name="Djavakhishvili T."/>
            <person name="Neitzel J."/>
            <person name="Peterson S."/>
            <person name="Awaya M."/>
            <person name="Eidermiller J."/>
            <person name="Canada D."/>
            <person name="Tracy J."/>
            <person name="Gailbreath K."/>
            <person name="Paddison P."/>
            <person name="Anderson B."/>
            <person name="Stidham T."/>
            <person name="Blattner F."/>
            <person name="Kutter E.M."/>
        </authorList>
    </citation>
    <scope>NUCLEOTIDE SEQUENCE [GENOMIC DNA]</scope>
</reference>
<reference key="2">
    <citation type="journal article" date="2003" name="Microbiol. Mol. Biol. Rev.">
        <title>Bacteriophage T4 genome.</title>
        <authorList>
            <person name="Miller E.S."/>
            <person name="Kutter E."/>
            <person name="Mosig G."/>
            <person name="Arisaka F."/>
            <person name="Kunisawa T."/>
            <person name="Ruger W."/>
        </authorList>
    </citation>
    <scope>NUCLEOTIDE SEQUENCE [LARGE SCALE GENOMIC DNA]</scope>
</reference>